<name>PSB10_MOUSE</name>
<comment type="function">
    <text evidence="8">The proteasome is a multicatalytic proteinase complex which is characterized by its ability to cleave peptides with Arg, Phe, Tyr, Leu, and Glu adjacent to the leaving group at neutral or slightly basic pH. The proteasome has an ATP-dependent proteolytic activity. This subunit is involved in antigen processing to generate class I binding peptides. Plays a role in determining the T-cell repertoire for an antiviral T-cell response.</text>
</comment>
<comment type="catalytic activity">
    <reaction>
        <text>Cleavage of peptide bonds with very broad specificity.</text>
        <dbReference type="EC" id="3.4.25.1"/>
    </reaction>
</comment>
<comment type="subunit">
    <text evidence="7 8 9">The 26S proteasome consists of a 20S proteasome core and two 19S regulatory subunits. The 20S proteasome core is composed of 28 subunits that are arranged in four stacked rings, resulting in a barrel-shaped structure. The two end rings are each formed by seven alpha subunits, and the two central rings are each formed by seven beta subunits. The catalytic chamber with the active sites is on the inside of the barrel. Component of the immunoproteasome, where it displaces the equivalent housekeeping subunit PSMB7. Component of the spermatoproteasome, a form of the proteasome specifically found in testis.</text>
</comment>
<comment type="subcellular location">
    <subcellularLocation>
        <location evidence="3">Cytoplasm</location>
    </subcellularLocation>
    <subcellularLocation>
        <location evidence="1">Nucleus</location>
    </subcellularLocation>
</comment>
<comment type="tissue specificity">
    <text evidence="8">Detected in liver (at protein level).</text>
</comment>
<comment type="induction">
    <text evidence="5">Up-regulated by interferon gamma (at protein level). Up-regulated by IRF1.</text>
</comment>
<comment type="PTM">
    <text evidence="11">Autocleaved. The resulting N-terminal Thr residue of the mature subunit is responsible for the nucleophile proteolytic activity.</text>
</comment>
<comment type="disruption phenotype">
    <text evidence="6">Impaired response of cytotoxic T-lymphocyte (CTL) to dominant epitopes of lymphocytic choriomeningitis virus (LCMV).</text>
</comment>
<comment type="similarity">
    <text evidence="3">Belongs to the peptidase T1B family.</text>
</comment>
<evidence type="ECO:0000250" key="1"/>
<evidence type="ECO:0000250" key="2">
    <source>
        <dbReference type="UniProtKB" id="P40306"/>
    </source>
</evidence>
<evidence type="ECO:0000255" key="3">
    <source>
        <dbReference type="PROSITE-ProRule" id="PRU00809"/>
    </source>
</evidence>
<evidence type="ECO:0000269" key="4">
    <source>
    </source>
</evidence>
<evidence type="ECO:0000269" key="5">
    <source>
    </source>
</evidence>
<evidence type="ECO:0000269" key="6">
    <source>
    </source>
</evidence>
<evidence type="ECO:0000269" key="7">
    <source>
    </source>
</evidence>
<evidence type="ECO:0000269" key="8">
    <source>
    </source>
</evidence>
<evidence type="ECO:0000269" key="9">
    <source>
    </source>
</evidence>
<evidence type="ECO:0000305" key="10"/>
<evidence type="ECO:0000305" key="11">
    <source>
    </source>
</evidence>
<evidence type="ECO:0007829" key="12">
    <source>
        <dbReference type="PDB" id="3UNF"/>
    </source>
</evidence>
<evidence type="ECO:0007829" key="13">
    <source>
        <dbReference type="PDB" id="3UNH"/>
    </source>
</evidence>
<feature type="propeptide" id="PRO_0000026653" description="Removed in mature form">
    <location>
        <begin position="1"/>
        <end position="39"/>
    </location>
</feature>
<feature type="chain" id="PRO_0000026654" description="Proteasome subunit beta type-10">
    <location>
        <begin position="40"/>
        <end position="273"/>
    </location>
</feature>
<feature type="active site" description="Nucleophile">
    <location>
        <position position="40"/>
    </location>
</feature>
<feature type="site" description="Cleavage; by autolysis" evidence="11">
    <location>
        <begin position="39"/>
        <end position="40"/>
    </location>
</feature>
<feature type="modified residue" description="N-acetylmethionine" evidence="2">
    <location>
        <position position="1"/>
    </location>
</feature>
<feature type="mutagenesis site" description="Prevents the correct removal of the propeptide." evidence="4">
    <original>T</original>
    <variation>A</variation>
    <location>
        <position position="40"/>
    </location>
</feature>
<feature type="sequence conflict" description="In Ref. 4; AAH04730." evidence="10" ref="4">
    <original>Q</original>
    <variation>E</variation>
    <location>
        <position position="4"/>
    </location>
</feature>
<feature type="sequence conflict" description="In Ref. 4; AAH04730." evidence="10" ref="4">
    <original>T</original>
    <variation>R</variation>
    <location>
        <position position="9"/>
    </location>
</feature>
<feature type="sequence conflict" description="In Ref. 3; CAA71825." evidence="10" ref="3">
    <original>A</original>
    <variation>L</variation>
    <location>
        <position position="189"/>
    </location>
</feature>
<feature type="strand" evidence="12">
    <location>
        <begin position="41"/>
        <end position="46"/>
    </location>
</feature>
<feature type="strand" evidence="12">
    <location>
        <begin position="48"/>
        <end position="55"/>
    </location>
</feature>
<feature type="strand" evidence="12">
    <location>
        <begin position="59"/>
        <end position="61"/>
    </location>
</feature>
<feature type="strand" evidence="12">
    <location>
        <begin position="64"/>
        <end position="69"/>
    </location>
</feature>
<feature type="strand" evidence="12">
    <location>
        <begin position="73"/>
        <end position="77"/>
    </location>
</feature>
<feature type="strand" evidence="12">
    <location>
        <begin position="80"/>
        <end position="87"/>
    </location>
</feature>
<feature type="helix" evidence="12">
    <location>
        <begin position="88"/>
        <end position="109"/>
    </location>
</feature>
<feature type="helix" evidence="12">
    <location>
        <begin position="115"/>
        <end position="128"/>
    </location>
</feature>
<feature type="turn" evidence="12">
    <location>
        <begin position="129"/>
        <end position="131"/>
    </location>
</feature>
<feature type="strand" evidence="12">
    <location>
        <begin position="135"/>
        <end position="143"/>
    </location>
</feature>
<feature type="strand" evidence="12">
    <location>
        <begin position="146"/>
        <end position="152"/>
    </location>
</feature>
<feature type="strand" evidence="12">
    <location>
        <begin position="158"/>
        <end position="160"/>
    </location>
</feature>
<feature type="strand" evidence="12">
    <location>
        <begin position="162"/>
        <end position="167"/>
    </location>
</feature>
<feature type="helix" evidence="12">
    <location>
        <begin position="170"/>
        <end position="180"/>
    </location>
</feature>
<feature type="helix" evidence="12">
    <location>
        <begin position="187"/>
        <end position="204"/>
    </location>
</feature>
<feature type="strand" evidence="13">
    <location>
        <begin position="205"/>
        <end position="207"/>
    </location>
</feature>
<feature type="strand" evidence="12">
    <location>
        <begin position="212"/>
        <end position="220"/>
    </location>
</feature>
<feature type="strand" evidence="12">
    <location>
        <begin position="222"/>
        <end position="229"/>
    </location>
</feature>
<feature type="strand" evidence="12">
    <location>
        <begin position="250"/>
        <end position="257"/>
    </location>
</feature>
<protein>
    <recommendedName>
        <fullName>Proteasome subunit beta type-10</fullName>
        <ecNumber>3.4.25.1</ecNumber>
    </recommendedName>
    <alternativeName>
        <fullName>Low molecular mass protein 10</fullName>
    </alternativeName>
    <alternativeName>
        <fullName>Macropain subunit MECl-1</fullName>
    </alternativeName>
    <alternativeName>
        <fullName>Multicatalytic endopeptidase complex subunit MECl-1</fullName>
    </alternativeName>
    <alternativeName>
        <fullName>Proteasome MECl-1</fullName>
    </alternativeName>
    <alternativeName>
        <fullName>Proteasome subunit beta-2i</fullName>
    </alternativeName>
</protein>
<dbReference type="EC" id="3.4.25.1"/>
<dbReference type="EMBL" id="U77784">
    <property type="protein sequence ID" value="AAB86994.1"/>
    <property type="molecule type" value="mRNA"/>
</dbReference>
<dbReference type="EMBL" id="U77785">
    <property type="protein sequence ID" value="AAB87637.1"/>
    <property type="molecule type" value="Genomic_DNA"/>
</dbReference>
<dbReference type="EMBL" id="D85561">
    <property type="protein sequence ID" value="BAA22855.1"/>
    <property type="molecule type" value="mRNA"/>
</dbReference>
<dbReference type="EMBL" id="D85562">
    <property type="protein sequence ID" value="BAA22856.1"/>
    <property type="molecule type" value="Genomic_DNA"/>
</dbReference>
<dbReference type="EMBL" id="Y10875">
    <property type="protein sequence ID" value="CAA71825.1"/>
    <property type="molecule type" value="mRNA"/>
</dbReference>
<dbReference type="EMBL" id="BC004730">
    <property type="protein sequence ID" value="AAH04730.1"/>
    <property type="molecule type" value="mRNA"/>
</dbReference>
<dbReference type="CCDS" id="CCDS22621.1"/>
<dbReference type="RefSeq" id="NP_038668.2">
    <property type="nucleotide sequence ID" value="NM_013640.3"/>
</dbReference>
<dbReference type="PDB" id="3UNF">
    <property type="method" value="X-ray"/>
    <property type="resolution" value="2.90 A"/>
    <property type="chains" value="H/V=40-273"/>
</dbReference>
<dbReference type="PDB" id="3UNH">
    <property type="method" value="X-ray"/>
    <property type="resolution" value="3.20 A"/>
    <property type="chains" value="H/V=40-273"/>
</dbReference>
<dbReference type="PDBsum" id="3UNF"/>
<dbReference type="PDBsum" id="3UNH"/>
<dbReference type="SMR" id="O35955"/>
<dbReference type="BioGRID" id="202419">
    <property type="interactions" value="20"/>
</dbReference>
<dbReference type="CORUM" id="O35955"/>
<dbReference type="FunCoup" id="O35955">
    <property type="interactions" value="236"/>
</dbReference>
<dbReference type="IntAct" id="O35955">
    <property type="interactions" value="4"/>
</dbReference>
<dbReference type="STRING" id="10090.ENSMUSP00000034369"/>
<dbReference type="BindingDB" id="O35955"/>
<dbReference type="ChEMBL" id="CHEMBL4523133"/>
<dbReference type="MEROPS" id="T01.014"/>
<dbReference type="GlyGen" id="O35955">
    <property type="glycosylation" value="1 site"/>
</dbReference>
<dbReference type="iPTMnet" id="O35955"/>
<dbReference type="PhosphoSitePlus" id="O35955"/>
<dbReference type="SwissPalm" id="O35955"/>
<dbReference type="CPTAC" id="non-CPTAC-3611"/>
<dbReference type="PaxDb" id="10090-ENSMUSP00000034369"/>
<dbReference type="PeptideAtlas" id="O35955"/>
<dbReference type="ProteomicsDB" id="291655"/>
<dbReference type="Pumba" id="O35955"/>
<dbReference type="Antibodypedia" id="29677">
    <property type="antibodies" value="242 antibodies from 34 providers"/>
</dbReference>
<dbReference type="DNASU" id="19171"/>
<dbReference type="Ensembl" id="ENSMUST00000034369.10">
    <property type="protein sequence ID" value="ENSMUSP00000034369.9"/>
    <property type="gene ID" value="ENSMUSG00000031897.10"/>
</dbReference>
<dbReference type="GeneID" id="19171"/>
<dbReference type="KEGG" id="mmu:19171"/>
<dbReference type="UCSC" id="uc009nep.2">
    <property type="organism name" value="mouse"/>
</dbReference>
<dbReference type="AGR" id="MGI:1096380"/>
<dbReference type="CTD" id="5699"/>
<dbReference type="MGI" id="MGI:1096380">
    <property type="gene designation" value="Psmb10"/>
</dbReference>
<dbReference type="VEuPathDB" id="HostDB:ENSMUSG00000031897"/>
<dbReference type="eggNOG" id="KOG0173">
    <property type="taxonomic scope" value="Eukaryota"/>
</dbReference>
<dbReference type="GeneTree" id="ENSGT00940000161047"/>
<dbReference type="HOGENOM" id="CLU_035750_3_0_1"/>
<dbReference type="InParanoid" id="O35955"/>
<dbReference type="OMA" id="GTQVDLC"/>
<dbReference type="OrthoDB" id="429533at2759"/>
<dbReference type="PhylomeDB" id="O35955"/>
<dbReference type="TreeFam" id="TF106222"/>
<dbReference type="Reactome" id="R-MMU-9907900">
    <property type="pathway name" value="Proteasome assembly"/>
</dbReference>
<dbReference type="BioGRID-ORCS" id="19171">
    <property type="hits" value="1 hit in 82 CRISPR screens"/>
</dbReference>
<dbReference type="ChiTaRS" id="Psmb10">
    <property type="organism name" value="mouse"/>
</dbReference>
<dbReference type="EvolutionaryTrace" id="O35955"/>
<dbReference type="PRO" id="PR:O35955"/>
<dbReference type="Proteomes" id="UP000000589">
    <property type="component" value="Chromosome 8"/>
</dbReference>
<dbReference type="RNAct" id="O35955">
    <property type="molecule type" value="protein"/>
</dbReference>
<dbReference type="Bgee" id="ENSMUSG00000031897">
    <property type="expression patterns" value="Expressed in small intestine Peyer's patch and 243 other cell types or tissues"/>
</dbReference>
<dbReference type="GO" id="GO:0005829">
    <property type="term" value="C:cytosol"/>
    <property type="evidence" value="ECO:0000304"/>
    <property type="project" value="Reactome"/>
</dbReference>
<dbReference type="GO" id="GO:0005654">
    <property type="term" value="C:nucleoplasm"/>
    <property type="evidence" value="ECO:0000304"/>
    <property type="project" value="Reactome"/>
</dbReference>
<dbReference type="GO" id="GO:0005839">
    <property type="term" value="C:proteasome core complex"/>
    <property type="evidence" value="ECO:0000314"/>
    <property type="project" value="UniProtKB"/>
</dbReference>
<dbReference type="GO" id="GO:0019774">
    <property type="term" value="C:proteasome core complex, beta-subunit complex"/>
    <property type="evidence" value="ECO:0000250"/>
    <property type="project" value="UniProtKB"/>
</dbReference>
<dbReference type="GO" id="GO:1990111">
    <property type="term" value="C:spermatoproteasome complex"/>
    <property type="evidence" value="ECO:0000314"/>
    <property type="project" value="UniProtKB"/>
</dbReference>
<dbReference type="GO" id="GO:0004298">
    <property type="term" value="F:threonine-type endopeptidase activity"/>
    <property type="evidence" value="ECO:0007669"/>
    <property type="project" value="UniProtKB-KW"/>
</dbReference>
<dbReference type="GO" id="GO:0000902">
    <property type="term" value="P:cell morphogenesis"/>
    <property type="evidence" value="ECO:0000315"/>
    <property type="project" value="MGI"/>
</dbReference>
<dbReference type="GO" id="GO:0051603">
    <property type="term" value="P:proteolysis involved in protein catabolic process"/>
    <property type="evidence" value="ECO:0007669"/>
    <property type="project" value="InterPro"/>
</dbReference>
<dbReference type="GO" id="GO:0042098">
    <property type="term" value="P:T cell proliferation"/>
    <property type="evidence" value="ECO:0000315"/>
    <property type="project" value="MGI"/>
</dbReference>
<dbReference type="CDD" id="cd03763">
    <property type="entry name" value="proteasome_beta_type_7"/>
    <property type="match status" value="1"/>
</dbReference>
<dbReference type="FunFam" id="3.60.20.10:FF:000005">
    <property type="entry name" value="Proteasome subunit beta type-2"/>
    <property type="match status" value="1"/>
</dbReference>
<dbReference type="Gene3D" id="3.60.20.10">
    <property type="entry name" value="Glutamine Phosphoribosylpyrophosphate, subunit 1, domain 1"/>
    <property type="match status" value="1"/>
</dbReference>
<dbReference type="InterPro" id="IPR029055">
    <property type="entry name" value="Ntn_hydrolases_N"/>
</dbReference>
<dbReference type="InterPro" id="IPR000243">
    <property type="entry name" value="Pept_T1A_subB"/>
</dbReference>
<dbReference type="InterPro" id="IPR024689">
    <property type="entry name" value="Proteasome_bsu_C"/>
</dbReference>
<dbReference type="InterPro" id="IPR016050">
    <property type="entry name" value="Proteasome_bsu_CS"/>
</dbReference>
<dbReference type="InterPro" id="IPR001353">
    <property type="entry name" value="Proteasome_sua/b"/>
</dbReference>
<dbReference type="InterPro" id="IPR023333">
    <property type="entry name" value="Proteasome_suB-type"/>
</dbReference>
<dbReference type="PANTHER" id="PTHR32194">
    <property type="entry name" value="METALLOPROTEASE TLDD"/>
    <property type="match status" value="1"/>
</dbReference>
<dbReference type="PANTHER" id="PTHR32194:SF4">
    <property type="entry name" value="PROTEASOME SUBUNIT BETA TYPE-7"/>
    <property type="match status" value="1"/>
</dbReference>
<dbReference type="Pfam" id="PF12465">
    <property type="entry name" value="Pr_beta_C"/>
    <property type="match status" value="1"/>
</dbReference>
<dbReference type="Pfam" id="PF00227">
    <property type="entry name" value="Proteasome"/>
    <property type="match status" value="1"/>
</dbReference>
<dbReference type="PRINTS" id="PR00141">
    <property type="entry name" value="PROTEASOME"/>
</dbReference>
<dbReference type="SUPFAM" id="SSF56235">
    <property type="entry name" value="N-terminal nucleophile aminohydrolases (Ntn hydrolases)"/>
    <property type="match status" value="1"/>
</dbReference>
<dbReference type="PROSITE" id="PS00854">
    <property type="entry name" value="PROTEASOME_BETA_1"/>
    <property type="match status" value="1"/>
</dbReference>
<dbReference type="PROSITE" id="PS51476">
    <property type="entry name" value="PROTEASOME_BETA_2"/>
    <property type="match status" value="1"/>
</dbReference>
<accession>O35955</accession>
<accession>O08687</accession>
<accession>Q99KC5</accession>
<keyword id="KW-0002">3D-structure</keyword>
<keyword id="KW-0007">Acetylation</keyword>
<keyword id="KW-0963">Cytoplasm</keyword>
<keyword id="KW-0378">Hydrolase</keyword>
<keyword id="KW-0539">Nucleus</keyword>
<keyword id="KW-0645">Protease</keyword>
<keyword id="KW-0647">Proteasome</keyword>
<keyword id="KW-1185">Reference proteome</keyword>
<keyword id="KW-0888">Threonine protease</keyword>
<keyword id="KW-0865">Zymogen</keyword>
<organism>
    <name type="scientific">Mus musculus</name>
    <name type="common">Mouse</name>
    <dbReference type="NCBI Taxonomy" id="10090"/>
    <lineage>
        <taxon>Eukaryota</taxon>
        <taxon>Metazoa</taxon>
        <taxon>Chordata</taxon>
        <taxon>Craniata</taxon>
        <taxon>Vertebrata</taxon>
        <taxon>Euteleostomi</taxon>
        <taxon>Mammalia</taxon>
        <taxon>Eutheria</taxon>
        <taxon>Euarchontoglires</taxon>
        <taxon>Glires</taxon>
        <taxon>Rodentia</taxon>
        <taxon>Myomorpha</taxon>
        <taxon>Muroidea</taxon>
        <taxon>Muridae</taxon>
        <taxon>Murinae</taxon>
        <taxon>Mus</taxon>
        <taxon>Mus</taxon>
    </lineage>
</organism>
<reference key="1">
    <citation type="journal article" date="1997" name="Genomics">
        <title>DNA sequence, chromosomal localization, and tissue expression of the mouse proteasome subunit lmp10 (Psmb10) gene.</title>
        <authorList>
            <person name="Cruz M."/>
            <person name="Elenich L.A."/>
            <person name="Smolarek T.A."/>
            <person name="Menon A.G."/>
            <person name="Monaco J.J."/>
        </authorList>
    </citation>
    <scope>NUCLEOTIDE SEQUENCE [GENOMIC DNA / MRNA]</scope>
    <source>
        <strain>129/SvJ</strain>
        <strain>BALB/cJ</strain>
        <tissue>Liver</tissue>
    </source>
</reference>
<reference key="2">
    <citation type="journal article" date="1997" name="J. Immunol.">
        <title>The mouse genes encoding the third pair of beta-type proteasome subunits regulated reciprocally by IFN-gamma: structural comparison, chromosomal localization, and analysis of the promoter.</title>
        <authorList>
            <person name="Hayashi M."/>
            <person name="Ishibashi T."/>
            <person name="Tanaka K."/>
            <person name="Kasahara M."/>
        </authorList>
    </citation>
    <scope>NUCLEOTIDE SEQUENCE [GENOMIC DNA / MRNA]</scope>
    <source>
        <strain>BALB/cJ</strain>
        <strain>C57BL/6J</strain>
    </source>
</reference>
<reference key="3">
    <citation type="submission" date="1997-01" db="EMBL/GenBank/DDBJ databases">
        <title>Molecular cloning of the mouse proteasome subunits MC14 and MECL-1: reciprocally regulated tissue expression of interferon-gamma-modulated proteasome subunits.</title>
        <authorList>
            <person name="Stohwasser R."/>
            <person name="Standera S."/>
            <person name="Peters I."/>
            <person name="Kloetzel P.-M."/>
            <person name="Groettrup M."/>
        </authorList>
    </citation>
    <scope>NUCLEOTIDE SEQUENCE [MRNA]</scope>
    <source>
        <strain>C57BL/6J</strain>
        <tissue>Spleen</tissue>
    </source>
</reference>
<reference key="4">
    <citation type="journal article" date="2004" name="Genome Res.">
        <title>The status, quality, and expansion of the NIH full-length cDNA project: the Mammalian Gene Collection (MGC).</title>
        <authorList>
            <consortium name="The MGC Project Team"/>
        </authorList>
    </citation>
    <scope>NUCLEOTIDE SEQUENCE [LARGE SCALE MRNA]</scope>
</reference>
<reference key="5">
    <citation type="journal article" date="1999" name="FEBS Lett.">
        <title>Mutational analysis of subunit i beta2 (MECL-1) demonstrates conservation of cleavage specificity between yeast and mammalian proteasomes.</title>
        <authorList>
            <person name="Salzmann U."/>
            <person name="Kral S."/>
            <person name="Braun B."/>
            <person name="Standera S."/>
            <person name="Schmidt M."/>
            <person name="Kloetzel P.M."/>
            <person name="Sijts A."/>
        </authorList>
    </citation>
    <scope>MUTAGENESIS OF THR-40</scope>
    <scope>AUTOCATALYTIC CLEAVAGE</scope>
</reference>
<reference key="6">
    <citation type="journal article" date="2005" name="FEBS Lett.">
        <title>IRF-1 mediates upregulation of LMP7 by IFN-gamma and concerted expression of immunosubunits of the proteasome.</title>
        <authorList>
            <person name="Namiki S."/>
            <person name="Nakamura T."/>
            <person name="Oshima S."/>
            <person name="Yamazaki M."/>
            <person name="Sekine Y."/>
            <person name="Tsuchiya K."/>
            <person name="Okamoto R."/>
            <person name="Kanai T."/>
            <person name="Watanabe M."/>
        </authorList>
    </citation>
    <scope>INDUCTION BY INTERFERON GAMMA AND IRF1</scope>
</reference>
<reference key="7">
    <citation type="journal article" date="2006" name="J. Immunol.">
        <title>An altered T cell repertoire in MECL-1-deficient mice.</title>
        <authorList>
            <person name="Basler M."/>
            <person name="Moebius J."/>
            <person name="Elenich L."/>
            <person name="Groettrup M."/>
            <person name="Monaco J.J."/>
        </authorList>
    </citation>
    <scope>DISRUPTION PHENOTYPE</scope>
</reference>
<reference key="8">
    <citation type="journal article" date="2006" name="Circ. Res.">
        <title>Mapping the murine cardiac 26S proteasome complexes.</title>
        <authorList>
            <person name="Gomes A.V."/>
            <person name="Zong C."/>
            <person name="Edmondson R.D."/>
            <person name="Li X."/>
            <person name="Stefani E."/>
            <person name="Zhang J."/>
            <person name="Jones R.C."/>
            <person name="Thyparambil S."/>
            <person name="Wang G.W."/>
            <person name="Qiao X."/>
            <person name="Bardag-Gorce F."/>
            <person name="Ping P."/>
        </authorList>
    </citation>
    <scope>IDENTIFICATION IN THE 20S PROTEASOME CORE COMPLEX</scope>
</reference>
<reference key="9">
    <citation type="journal article" date="2010" name="Cell">
        <title>A tissue-specific atlas of mouse protein phosphorylation and expression.</title>
        <authorList>
            <person name="Huttlin E.L."/>
            <person name="Jedrychowski M.P."/>
            <person name="Elias J.E."/>
            <person name="Goswami T."/>
            <person name="Rad R."/>
            <person name="Beausoleil S.A."/>
            <person name="Villen J."/>
            <person name="Haas W."/>
            <person name="Sowa M.E."/>
            <person name="Gygi S.P."/>
        </authorList>
    </citation>
    <scope>IDENTIFICATION BY MASS SPECTROMETRY [LARGE SCALE ANALYSIS]</scope>
    <source>
        <tissue>Brown adipose tissue</tissue>
        <tissue>Heart</tissue>
        <tissue>Kidney</tissue>
        <tissue>Liver</tissue>
        <tissue>Lung</tissue>
        <tissue>Spleen</tissue>
        <tissue>Testis</tissue>
    </source>
</reference>
<reference key="10">
    <citation type="journal article" date="2013" name="Cell">
        <title>Acetylation-mediated proteasomal degradation of core histones during DNA repair and spermatogenesis.</title>
        <authorList>
            <person name="Qian M.X."/>
            <person name="Pang Y."/>
            <person name="Liu C.H."/>
            <person name="Haratake K."/>
            <person name="Du B.Y."/>
            <person name="Ji D.Y."/>
            <person name="Wang G.F."/>
            <person name="Zhu Q.Q."/>
            <person name="Song W."/>
            <person name="Yu Y."/>
            <person name="Zhang X.X."/>
            <person name="Huang H.T."/>
            <person name="Miao S."/>
            <person name="Chen L.B."/>
            <person name="Zhang Z.H."/>
            <person name="Liang Y.N."/>
            <person name="Liu S."/>
            <person name="Cha H."/>
            <person name="Yang D."/>
            <person name="Zhai Y."/>
            <person name="Komatsu T."/>
            <person name="Tsuruta F."/>
            <person name="Li H."/>
            <person name="Cao C."/>
            <person name="Li W."/>
            <person name="Li G.H."/>
            <person name="Cheng Y."/>
            <person name="Chiba T."/>
            <person name="Wang L."/>
            <person name="Goldberg A.L."/>
            <person name="Shen Y."/>
            <person name="Qiu X.B."/>
        </authorList>
    </citation>
    <scope>IDENTIFICATION IN THE SPERMATOPROTEASOME</scope>
</reference>
<reference key="11">
    <citation type="journal article" date="2012" name="Cell">
        <title>Immuno- and constitutive proteasome crystal structures reveal differences in substrate and inhibitor specificity.</title>
        <authorList>
            <person name="Huber E.M."/>
            <person name="Basler M."/>
            <person name="Schwab R."/>
            <person name="Heinemeyer W."/>
            <person name="Kirk C.J."/>
            <person name="Groettrup M."/>
            <person name="Groll M."/>
        </authorList>
    </citation>
    <scope>X-RAY CRYSTALLOGRAPHY (2.90 ANGSTROMS) OF 20S IMMUNOPROTEASOME</scope>
    <scope>SUBUNIT</scope>
    <scope>FUNCTION</scope>
    <scope>TISSUE SPECIFICITY</scope>
</reference>
<gene>
    <name type="primary">Psmb10</name>
    <name type="synonym">Lmp10</name>
    <name type="synonym">Mecl1</name>
</gene>
<proteinExistence type="evidence at protein level"/>
<sequence>MLKQAVEPTGGFSFENCQRNASLEHVLPGLRVPHARKTGTTIAGLVFRDGVILGADTRATNDSVVADKSCEKIHFIAPKIYCCGAGVAADTEMTTRMAASKMELHALSTGREPRVATVTRILRQTLFRYQGHVGASLVVGGVDLNGPQLYEVHPHGSYSRLPFTALGSGQGAAVALLEDRFQPNMTLEAAQELLVEAITAGILSDLGSGGNVDACVITAGGAKLQRALSTPTEPVQRAGRYRFAPGTTPVLTREVRPLTLELLEETVQAMEVE</sequence>